<name>MRAY_STRS2</name>
<proteinExistence type="inferred from homology"/>
<accession>A4W3H1</accession>
<feature type="chain" id="PRO_1000003078" description="Phospho-N-acetylmuramoyl-pentapeptide-transferase">
    <location>
        <begin position="1"/>
        <end position="332"/>
    </location>
</feature>
<feature type="transmembrane region" description="Helical" evidence="1">
    <location>
        <begin position="3"/>
        <end position="23"/>
    </location>
</feature>
<feature type="transmembrane region" description="Helical" evidence="1">
    <location>
        <begin position="52"/>
        <end position="72"/>
    </location>
</feature>
<feature type="transmembrane region" description="Helical" evidence="1">
    <location>
        <begin position="74"/>
        <end position="94"/>
    </location>
</feature>
<feature type="transmembrane region" description="Helical" evidence="1">
    <location>
        <begin position="115"/>
        <end position="135"/>
    </location>
</feature>
<feature type="transmembrane region" description="Helical" evidence="1">
    <location>
        <begin position="140"/>
        <end position="160"/>
    </location>
</feature>
<feature type="transmembrane region" description="Helical" evidence="1">
    <location>
        <begin position="172"/>
        <end position="192"/>
    </location>
</feature>
<feature type="transmembrane region" description="Helical" evidence="1">
    <location>
        <begin position="197"/>
        <end position="217"/>
    </location>
</feature>
<feature type="transmembrane region" description="Helical" evidence="1">
    <location>
        <begin position="223"/>
        <end position="243"/>
    </location>
</feature>
<feature type="transmembrane region" description="Helical" evidence="1">
    <location>
        <begin position="248"/>
        <end position="268"/>
    </location>
</feature>
<feature type="transmembrane region" description="Helical" evidence="1">
    <location>
        <begin position="311"/>
        <end position="331"/>
    </location>
</feature>
<evidence type="ECO:0000255" key="1">
    <source>
        <dbReference type="HAMAP-Rule" id="MF_00038"/>
    </source>
</evidence>
<keyword id="KW-0131">Cell cycle</keyword>
<keyword id="KW-0132">Cell division</keyword>
<keyword id="KW-1003">Cell membrane</keyword>
<keyword id="KW-0133">Cell shape</keyword>
<keyword id="KW-0961">Cell wall biogenesis/degradation</keyword>
<keyword id="KW-0460">Magnesium</keyword>
<keyword id="KW-0472">Membrane</keyword>
<keyword id="KW-0479">Metal-binding</keyword>
<keyword id="KW-0573">Peptidoglycan synthesis</keyword>
<keyword id="KW-0808">Transferase</keyword>
<keyword id="KW-0812">Transmembrane</keyword>
<keyword id="KW-1133">Transmembrane helix</keyword>
<sequence>MQFALMSGLVAFLATVLLIPRFITFYQAKRIEGQQMHEDVKQHQFKAGTPTMGGTVFLVVAILVSLLFATAFQLLTGGVLAILFILALYGVVGFLDDFLKIFRKINEGLNPKQKLALQILGGIVFYFVHVRGAGGGELNVFGHMVHLGVLYFPFVLFWLVGFSNAVNLTDGIDGLASISVVISLLAYSVIAFNEQKFDILLVCVTMIGGLLGFFVYNRKPAKIFMGDVGSLALGGMLATISIALRQEWTLLLIGLVYVIETSSVMLQVSYFKYTKKRFGEGRRIFRMTPFHHHLELGGLTGKAEKWSEWKVDFFLWSVGLIMSLITLAILYL</sequence>
<protein>
    <recommendedName>
        <fullName evidence="1">Phospho-N-acetylmuramoyl-pentapeptide-transferase</fullName>
        <ecNumber evidence="1">2.7.8.13</ecNumber>
    </recommendedName>
    <alternativeName>
        <fullName evidence="1">UDP-MurNAc-pentapeptide phosphotransferase</fullName>
    </alternativeName>
</protein>
<gene>
    <name evidence="1" type="primary">mraY</name>
    <name type="ordered locus">SSU98_1752</name>
</gene>
<dbReference type="EC" id="2.7.8.13" evidence="1"/>
<dbReference type="EMBL" id="CP000408">
    <property type="protein sequence ID" value="ABP92910.1"/>
    <property type="molecule type" value="Genomic_DNA"/>
</dbReference>
<dbReference type="SMR" id="A4W3H1"/>
<dbReference type="KEGG" id="ssv:SSU98_1752"/>
<dbReference type="HOGENOM" id="CLU_023982_0_1_9"/>
<dbReference type="UniPathway" id="UPA00219"/>
<dbReference type="GO" id="GO:0005886">
    <property type="term" value="C:plasma membrane"/>
    <property type="evidence" value="ECO:0007669"/>
    <property type="project" value="UniProtKB-SubCell"/>
</dbReference>
<dbReference type="GO" id="GO:0046872">
    <property type="term" value="F:metal ion binding"/>
    <property type="evidence" value="ECO:0007669"/>
    <property type="project" value="UniProtKB-KW"/>
</dbReference>
<dbReference type="GO" id="GO:0008963">
    <property type="term" value="F:phospho-N-acetylmuramoyl-pentapeptide-transferase activity"/>
    <property type="evidence" value="ECO:0007669"/>
    <property type="project" value="UniProtKB-UniRule"/>
</dbReference>
<dbReference type="GO" id="GO:0051301">
    <property type="term" value="P:cell division"/>
    <property type="evidence" value="ECO:0007669"/>
    <property type="project" value="UniProtKB-KW"/>
</dbReference>
<dbReference type="GO" id="GO:0071555">
    <property type="term" value="P:cell wall organization"/>
    <property type="evidence" value="ECO:0007669"/>
    <property type="project" value="UniProtKB-KW"/>
</dbReference>
<dbReference type="GO" id="GO:0009252">
    <property type="term" value="P:peptidoglycan biosynthetic process"/>
    <property type="evidence" value="ECO:0007669"/>
    <property type="project" value="UniProtKB-UniRule"/>
</dbReference>
<dbReference type="GO" id="GO:0008360">
    <property type="term" value="P:regulation of cell shape"/>
    <property type="evidence" value="ECO:0007669"/>
    <property type="project" value="UniProtKB-KW"/>
</dbReference>
<dbReference type="CDD" id="cd06852">
    <property type="entry name" value="GT_MraY"/>
    <property type="match status" value="1"/>
</dbReference>
<dbReference type="HAMAP" id="MF_00038">
    <property type="entry name" value="MraY"/>
    <property type="match status" value="1"/>
</dbReference>
<dbReference type="InterPro" id="IPR000715">
    <property type="entry name" value="Glycosyl_transferase_4"/>
</dbReference>
<dbReference type="InterPro" id="IPR003524">
    <property type="entry name" value="PNAcMuramoyl-5peptid_Trfase"/>
</dbReference>
<dbReference type="InterPro" id="IPR018480">
    <property type="entry name" value="PNAcMuramoyl-5peptid_Trfase_CS"/>
</dbReference>
<dbReference type="NCBIfam" id="TIGR00445">
    <property type="entry name" value="mraY"/>
    <property type="match status" value="1"/>
</dbReference>
<dbReference type="PANTHER" id="PTHR22926">
    <property type="entry name" value="PHOSPHO-N-ACETYLMURAMOYL-PENTAPEPTIDE-TRANSFERASE"/>
    <property type="match status" value="1"/>
</dbReference>
<dbReference type="PANTHER" id="PTHR22926:SF5">
    <property type="entry name" value="PHOSPHO-N-ACETYLMURAMOYL-PENTAPEPTIDE-TRANSFERASE HOMOLOG"/>
    <property type="match status" value="1"/>
</dbReference>
<dbReference type="Pfam" id="PF00953">
    <property type="entry name" value="Glycos_transf_4"/>
    <property type="match status" value="1"/>
</dbReference>
<dbReference type="Pfam" id="PF10555">
    <property type="entry name" value="MraY_sig1"/>
    <property type="match status" value="1"/>
</dbReference>
<dbReference type="PROSITE" id="PS01348">
    <property type="entry name" value="MRAY_2"/>
    <property type="match status" value="1"/>
</dbReference>
<comment type="function">
    <text evidence="1">Catalyzes the initial step of the lipid cycle reactions in the biosynthesis of the cell wall peptidoglycan: transfers peptidoglycan precursor phospho-MurNAc-pentapeptide from UDP-MurNAc-pentapeptide onto the lipid carrier undecaprenyl phosphate, yielding undecaprenyl-pyrophosphoryl-MurNAc-pentapeptide, known as lipid I.</text>
</comment>
<comment type="catalytic activity">
    <reaction evidence="1">
        <text>UDP-N-acetyl-alpha-D-muramoyl-L-alanyl-gamma-D-glutamyl-L-lysyl-D-alanyl-D-alanine + di-trans,octa-cis-undecaprenyl phosphate = Mur2Ac(oyl-L-Ala-gamma-D-Glu-L-Lys-D-Ala-D-Ala)-di-trans,octa-cis-undecaprenyl diphosphate + UMP</text>
        <dbReference type="Rhea" id="RHEA:21920"/>
        <dbReference type="ChEBI" id="CHEBI:57865"/>
        <dbReference type="ChEBI" id="CHEBI:60032"/>
        <dbReference type="ChEBI" id="CHEBI:60392"/>
        <dbReference type="ChEBI" id="CHEBI:70758"/>
        <dbReference type="EC" id="2.7.8.13"/>
    </reaction>
</comment>
<comment type="cofactor">
    <cofactor evidence="1">
        <name>Mg(2+)</name>
        <dbReference type="ChEBI" id="CHEBI:18420"/>
    </cofactor>
</comment>
<comment type="pathway">
    <text evidence="1">Cell wall biogenesis; peptidoglycan biosynthesis.</text>
</comment>
<comment type="subcellular location">
    <subcellularLocation>
        <location evidence="1">Cell membrane</location>
        <topology evidence="1">Multi-pass membrane protein</topology>
    </subcellularLocation>
</comment>
<comment type="similarity">
    <text evidence="1">Belongs to the glycosyltransferase 4 family. MraY subfamily.</text>
</comment>
<organism>
    <name type="scientific">Streptococcus suis (strain 98HAH33)</name>
    <dbReference type="NCBI Taxonomy" id="391296"/>
    <lineage>
        <taxon>Bacteria</taxon>
        <taxon>Bacillati</taxon>
        <taxon>Bacillota</taxon>
        <taxon>Bacilli</taxon>
        <taxon>Lactobacillales</taxon>
        <taxon>Streptococcaceae</taxon>
        <taxon>Streptococcus</taxon>
    </lineage>
</organism>
<reference key="1">
    <citation type="journal article" date="2007" name="PLoS ONE">
        <title>A glimpse of streptococcal toxic shock syndrome from comparative genomics of S. suis 2 Chinese isolates.</title>
        <authorList>
            <person name="Chen C."/>
            <person name="Tang J."/>
            <person name="Dong W."/>
            <person name="Wang C."/>
            <person name="Feng Y."/>
            <person name="Wang J."/>
            <person name="Zheng F."/>
            <person name="Pan X."/>
            <person name="Liu D."/>
            <person name="Li M."/>
            <person name="Song Y."/>
            <person name="Zhu X."/>
            <person name="Sun H."/>
            <person name="Feng T."/>
            <person name="Guo Z."/>
            <person name="Ju A."/>
            <person name="Ge J."/>
            <person name="Dong Y."/>
            <person name="Sun W."/>
            <person name="Jiang Y."/>
            <person name="Wang J."/>
            <person name="Yan J."/>
            <person name="Yang H."/>
            <person name="Wang X."/>
            <person name="Gao G.F."/>
            <person name="Yang R."/>
            <person name="Wang J."/>
            <person name="Yu J."/>
        </authorList>
    </citation>
    <scope>NUCLEOTIDE SEQUENCE [LARGE SCALE GENOMIC DNA]</scope>
    <source>
        <strain>98HAH33</strain>
    </source>
</reference>